<reference key="1">
    <citation type="submission" date="2003-01" db="EMBL/GenBank/DDBJ databases">
        <authorList>
            <consortium name="NIH - Xenopus Gene Collection (XGC) project"/>
        </authorList>
    </citation>
    <scope>NUCLEOTIDE SEQUENCE [LARGE SCALE MRNA]</scope>
    <source>
        <tissue>Embryo</tissue>
    </source>
</reference>
<name>SHOC2_XENLA</name>
<evidence type="ECO:0000250" key="1"/>
<evidence type="ECO:0000250" key="2">
    <source>
        <dbReference type="UniProtKB" id="Q9UQ13"/>
    </source>
</evidence>
<evidence type="ECO:0000256" key="3">
    <source>
        <dbReference type="SAM" id="MobiDB-lite"/>
    </source>
</evidence>
<evidence type="ECO:0000305" key="4"/>
<comment type="function">
    <text evidence="2">Core component of the SHOC2-MRAS-PP1c (SMP) holophosphatase complex that regulates activation of the MAPK pathway (By similarity). Acts as a scaffolding protein in the SMP complex (By similarity). The SMP complex specifically dephosphorylates the inhibitory phosphorylation Raf kinases, stimulating their kinase activities (By similarity). The SMP complex enhances the dephosphorylation activity and substrate specificity of PP1c (By similarity).</text>
</comment>
<comment type="subcellular location">
    <subcellularLocation>
        <location evidence="1">Cytoplasm</location>
    </subcellularLocation>
    <subcellularLocation>
        <location evidence="1">Nucleus</location>
    </subcellularLocation>
</comment>
<comment type="similarity">
    <text evidence="4">Belongs to the SHOC2 family.</text>
</comment>
<dbReference type="EMBL" id="BC042263">
    <property type="protein sequence ID" value="AAH42263.1"/>
    <property type="molecule type" value="mRNA"/>
</dbReference>
<dbReference type="RefSeq" id="NP_001080350.1">
    <property type="nucleotide sequence ID" value="NM_001086881.1"/>
</dbReference>
<dbReference type="SMR" id="Q8AVI4"/>
<dbReference type="IntAct" id="Q8AVI4">
    <property type="interactions" value="1"/>
</dbReference>
<dbReference type="DNASU" id="380042"/>
<dbReference type="GeneID" id="380042"/>
<dbReference type="KEGG" id="xla:380042"/>
<dbReference type="AGR" id="Xenbase:XB-GENE-493506"/>
<dbReference type="CTD" id="380042"/>
<dbReference type="Xenbase" id="XB-GENE-493506">
    <property type="gene designation" value="shoc2.S"/>
</dbReference>
<dbReference type="OrthoDB" id="676979at2759"/>
<dbReference type="Proteomes" id="UP000186698">
    <property type="component" value="Chromosome 7S"/>
</dbReference>
<dbReference type="Bgee" id="380042">
    <property type="expression patterns" value="Expressed in internal ear and 19 other cell types or tissues"/>
</dbReference>
<dbReference type="GO" id="GO:0005737">
    <property type="term" value="C:cytoplasm"/>
    <property type="evidence" value="ECO:0000250"/>
    <property type="project" value="UniProtKB"/>
</dbReference>
<dbReference type="GO" id="GO:0005634">
    <property type="term" value="C:nucleus"/>
    <property type="evidence" value="ECO:0000250"/>
    <property type="project" value="UniProtKB"/>
</dbReference>
<dbReference type="GO" id="GO:0000164">
    <property type="term" value="C:protein phosphatase type 1 complex"/>
    <property type="evidence" value="ECO:0000250"/>
    <property type="project" value="UniProtKB"/>
</dbReference>
<dbReference type="GO" id="GO:0019903">
    <property type="term" value="F:protein phosphatase binding"/>
    <property type="evidence" value="ECO:0000250"/>
    <property type="project" value="UniProtKB"/>
</dbReference>
<dbReference type="GO" id="GO:0046579">
    <property type="term" value="P:positive regulation of Ras protein signal transduction"/>
    <property type="evidence" value="ECO:0000250"/>
    <property type="project" value="UniProtKB"/>
</dbReference>
<dbReference type="FunFam" id="3.80.10.10:FF:000115">
    <property type="entry name" value="leucine-rich repeat protein SHOC-2"/>
    <property type="match status" value="1"/>
</dbReference>
<dbReference type="FunFam" id="3.80.10.10:FF:000327">
    <property type="entry name" value="leucine-rich repeat protein SHOC-2 isoform X2"/>
    <property type="match status" value="1"/>
</dbReference>
<dbReference type="FunFam" id="3.80.10.10:FF:000093">
    <property type="entry name" value="Putative leucine-rich repeat protein shoc-2"/>
    <property type="match status" value="1"/>
</dbReference>
<dbReference type="Gene3D" id="3.80.10.10">
    <property type="entry name" value="Ribonuclease Inhibitor"/>
    <property type="match status" value="4"/>
</dbReference>
<dbReference type="InterPro" id="IPR001611">
    <property type="entry name" value="Leu-rich_rpt"/>
</dbReference>
<dbReference type="InterPro" id="IPR003591">
    <property type="entry name" value="Leu-rich_rpt_typical-subtyp"/>
</dbReference>
<dbReference type="InterPro" id="IPR032675">
    <property type="entry name" value="LRR_dom_sf"/>
</dbReference>
<dbReference type="InterPro" id="IPR050216">
    <property type="entry name" value="LRR_domain-containing"/>
</dbReference>
<dbReference type="InterPro" id="IPR055414">
    <property type="entry name" value="LRR_R13L4/SHOC2-like"/>
</dbReference>
<dbReference type="PANTHER" id="PTHR48051">
    <property type="match status" value="1"/>
</dbReference>
<dbReference type="PANTHER" id="PTHR48051:SF54">
    <property type="entry name" value="LEUCINE-RICH REPEAT-CONTAINING PROTEIN"/>
    <property type="match status" value="1"/>
</dbReference>
<dbReference type="Pfam" id="PF23598">
    <property type="entry name" value="LRR_14"/>
    <property type="match status" value="2"/>
</dbReference>
<dbReference type="Pfam" id="PF13855">
    <property type="entry name" value="LRR_8"/>
    <property type="match status" value="1"/>
</dbReference>
<dbReference type="SMART" id="SM00364">
    <property type="entry name" value="LRR_BAC"/>
    <property type="match status" value="11"/>
</dbReference>
<dbReference type="SMART" id="SM00365">
    <property type="entry name" value="LRR_SD22"/>
    <property type="match status" value="8"/>
</dbReference>
<dbReference type="SMART" id="SM00369">
    <property type="entry name" value="LRR_TYP"/>
    <property type="match status" value="16"/>
</dbReference>
<dbReference type="SUPFAM" id="SSF52058">
    <property type="entry name" value="L domain-like"/>
    <property type="match status" value="2"/>
</dbReference>
<dbReference type="PROSITE" id="PS51450">
    <property type="entry name" value="LRR"/>
    <property type="match status" value="17"/>
</dbReference>
<sequence length="577" mass="64100">MSSSAGKDKEPKVSSGTKEREKEAKAVGPVKESKDKDLKSKVKDAKEGKRDPVGAQAGVAFSLDNTIKRANPASGMRKKASNAEVIKELSKCREENSTRLDLAKKSIHMLPVSIKDLTQITELYLYGNKLQSLPAEVGNLVNLVKLALSENSLTSLPDSLDNLKKLCMLDLRHNKLREIPPVVYRLSSLTTLFLRFNRITAVEKDLKMLPKLTMLSIRENKIKHLPAEIGELCNLITLDVAHNQLEHLPKEIGNCTQITNLDLQHNELLDLPDTIGNLSSLSRLGLRYNRLSAVPRSLSKCSELDELNLENNNISTLPEGLLSSLVKVNSLTLARNCFQSYPVGGPSQFSSIYSLNMEHNRINKIPFGIFSRAKVLSKLNMKDNQLTSLPLDFGTWTSMVELNLATNQLTKIPEDVSGLVSIEVLILSNNLLKKLPHGIGNLRKLRELDLEENKLESLPNEIAYLKDLQKLVLTNNQLTTLPRGIGHLTNLTHLGLGENLLTHLPEEIGTLENLEELYLNDNPNLHSLPFELALCSKLSIMSIENCPLSHLPPQIVAGGPSFIIQFLKMQGPYRAMV</sequence>
<keyword id="KW-0963">Cytoplasm</keyword>
<keyword id="KW-0433">Leucine-rich repeat</keyword>
<keyword id="KW-0539">Nucleus</keyword>
<keyword id="KW-1185">Reference proteome</keyword>
<keyword id="KW-0677">Repeat</keyword>
<organism>
    <name type="scientific">Xenopus laevis</name>
    <name type="common">African clawed frog</name>
    <dbReference type="NCBI Taxonomy" id="8355"/>
    <lineage>
        <taxon>Eukaryota</taxon>
        <taxon>Metazoa</taxon>
        <taxon>Chordata</taxon>
        <taxon>Craniata</taxon>
        <taxon>Vertebrata</taxon>
        <taxon>Euteleostomi</taxon>
        <taxon>Amphibia</taxon>
        <taxon>Batrachia</taxon>
        <taxon>Anura</taxon>
        <taxon>Pipoidea</taxon>
        <taxon>Pipidae</taxon>
        <taxon>Xenopodinae</taxon>
        <taxon>Xenopus</taxon>
        <taxon>Xenopus</taxon>
    </lineage>
</organism>
<feature type="chain" id="PRO_0000385629" description="Leucine-rich repeat protein SHOC-2">
    <location>
        <begin position="1"/>
        <end position="577"/>
    </location>
</feature>
<feature type="repeat" description="LRR 1">
    <location>
        <begin position="96"/>
        <end position="118"/>
    </location>
</feature>
<feature type="repeat" description="LRR 2">
    <location>
        <begin position="119"/>
        <end position="140"/>
    </location>
</feature>
<feature type="repeat" description="LRR 3">
    <location>
        <begin position="142"/>
        <end position="164"/>
    </location>
</feature>
<feature type="repeat" description="LRR 4">
    <location>
        <begin position="165"/>
        <end position="186"/>
    </location>
</feature>
<feature type="repeat" description="LRR 5">
    <location>
        <begin position="188"/>
        <end position="209"/>
    </location>
</feature>
<feature type="repeat" description="LRR 6">
    <location>
        <begin position="211"/>
        <end position="232"/>
    </location>
</feature>
<feature type="repeat" description="LRR 7">
    <location>
        <begin position="234"/>
        <end position="255"/>
    </location>
</feature>
<feature type="repeat" description="LRR 8">
    <location>
        <begin position="257"/>
        <end position="278"/>
    </location>
</feature>
<feature type="repeat" description="LRR 9">
    <location>
        <begin position="280"/>
        <end position="302"/>
    </location>
</feature>
<feature type="repeat" description="LRR 10">
    <location>
        <begin position="303"/>
        <end position="324"/>
    </location>
</feature>
<feature type="repeat" description="LRR 11">
    <location>
        <begin position="327"/>
        <end position="348"/>
    </location>
</feature>
<feature type="repeat" description="LRR 12">
    <location>
        <begin position="351"/>
        <end position="372"/>
    </location>
</feature>
<feature type="repeat" description="LRR 13">
    <location>
        <begin position="375"/>
        <end position="395"/>
    </location>
</feature>
<feature type="repeat" description="LRR 14">
    <location>
        <begin position="398"/>
        <end position="419"/>
    </location>
</feature>
<feature type="repeat" description="LRR 15">
    <location>
        <begin position="421"/>
        <end position="443"/>
    </location>
</feature>
<feature type="repeat" description="LRR 16">
    <location>
        <begin position="444"/>
        <end position="465"/>
    </location>
</feature>
<feature type="repeat" description="LRR 17">
    <location>
        <begin position="467"/>
        <end position="489"/>
    </location>
</feature>
<feature type="repeat" description="LRR 18">
    <location>
        <begin position="490"/>
        <end position="511"/>
    </location>
</feature>
<feature type="repeat" description="LRR 19">
    <location>
        <begin position="513"/>
        <end position="535"/>
    </location>
</feature>
<feature type="repeat" description="LRR 20">
    <location>
        <begin position="537"/>
        <end position="558"/>
    </location>
</feature>
<feature type="region of interest" description="Disordered" evidence="3">
    <location>
        <begin position="1"/>
        <end position="53"/>
    </location>
</feature>
<feature type="compositionally biased region" description="Basic and acidic residues" evidence="3">
    <location>
        <begin position="1"/>
        <end position="52"/>
    </location>
</feature>
<proteinExistence type="evidence at transcript level"/>
<protein>
    <recommendedName>
        <fullName>Leucine-rich repeat protein SHOC-2</fullName>
    </recommendedName>
    <alternativeName>
        <fullName>Protein soc-2 homolog</fullName>
    </alternativeName>
    <alternativeName>
        <fullName>Protein sur-8 homolog</fullName>
    </alternativeName>
</protein>
<accession>Q8AVI4</accession>
<gene>
    <name type="primary">shoc2</name>
</gene>